<feature type="chain" id="PRO_0000343017" description="Golgi apparatus membrane protein TVP18">
    <location>
        <begin position="1"/>
        <end position="159"/>
    </location>
</feature>
<feature type="transmembrane region" description="Helical" evidence="2">
    <location>
        <begin position="18"/>
        <end position="38"/>
    </location>
</feature>
<feature type="transmembrane region" description="Helical" evidence="2">
    <location>
        <begin position="40"/>
        <end position="60"/>
    </location>
</feature>
<feature type="transmembrane region" description="Helical" evidence="2">
    <location>
        <begin position="84"/>
        <end position="101"/>
    </location>
</feature>
<feature type="transmembrane region" description="Helical" evidence="2">
    <location>
        <begin position="105"/>
        <end position="125"/>
    </location>
</feature>
<feature type="glycosylation site" description="N-linked (GlcNAc...) asparagine" evidence="2">
    <location>
        <position position="11"/>
    </location>
</feature>
<proteinExistence type="inferred from homology"/>
<name>TVP18_CHAGB</name>
<sequence length="159" mass="17675">MTLKEEFATRNFSIYGQWLGILSMILCFALGIANLFTFRVLIIILSAVCLASSFVILFIEVPLLLRICPTSSKFDDAIRKITTNYMRAAAYAVMAVVQWLTLLSAATSLLAAAVFLSFTCICYLLAGHQGPGLCRQQDPGRRRRRADDCMSGRARLPWA</sequence>
<organism>
    <name type="scientific">Chaetomium globosum (strain ATCC 6205 / CBS 148.51 / DSM 1962 / NBRC 6347 / NRRL 1970)</name>
    <name type="common">Soil fungus</name>
    <dbReference type="NCBI Taxonomy" id="306901"/>
    <lineage>
        <taxon>Eukaryota</taxon>
        <taxon>Fungi</taxon>
        <taxon>Dikarya</taxon>
        <taxon>Ascomycota</taxon>
        <taxon>Pezizomycotina</taxon>
        <taxon>Sordariomycetes</taxon>
        <taxon>Sordariomycetidae</taxon>
        <taxon>Sordariales</taxon>
        <taxon>Chaetomiaceae</taxon>
        <taxon>Chaetomium</taxon>
    </lineage>
</organism>
<evidence type="ECO:0000250" key="1"/>
<evidence type="ECO:0000255" key="2"/>
<evidence type="ECO:0000305" key="3"/>
<protein>
    <recommendedName>
        <fullName>Golgi apparatus membrane protein TVP18</fullName>
    </recommendedName>
</protein>
<comment type="function">
    <text evidence="1">Golgi membrane protein involved in vesicular trafficking.</text>
</comment>
<comment type="subcellular location">
    <subcellularLocation>
        <location evidence="1">Golgi apparatus membrane</location>
        <topology evidence="1">Multi-pass membrane protein</topology>
    </subcellularLocation>
</comment>
<comment type="similarity">
    <text evidence="3">Belongs to the TVP18 family.</text>
</comment>
<dbReference type="EMBL" id="CH408034">
    <property type="protein sequence ID" value="EAQ84966.1"/>
    <property type="molecule type" value="Genomic_DNA"/>
</dbReference>
<dbReference type="RefSeq" id="XP_001226907.1">
    <property type="nucleotide sequence ID" value="XM_001226906.1"/>
</dbReference>
<dbReference type="FunCoup" id="Q2GSS4">
    <property type="interactions" value="33"/>
</dbReference>
<dbReference type="STRING" id="306901.Q2GSS4"/>
<dbReference type="GlyCosmos" id="Q2GSS4">
    <property type="glycosylation" value="1 site, No reported glycans"/>
</dbReference>
<dbReference type="GeneID" id="4395391"/>
<dbReference type="VEuPathDB" id="FungiDB:CHGG_08980"/>
<dbReference type="eggNOG" id="ENOG502S3AC">
    <property type="taxonomic scope" value="Eukaryota"/>
</dbReference>
<dbReference type="HOGENOM" id="CLU_118698_0_0_1"/>
<dbReference type="InParanoid" id="Q2GSS4"/>
<dbReference type="OMA" id="IYAQWLG"/>
<dbReference type="OrthoDB" id="5591789at2759"/>
<dbReference type="Proteomes" id="UP000001056">
    <property type="component" value="Unassembled WGS sequence"/>
</dbReference>
<dbReference type="GO" id="GO:0000139">
    <property type="term" value="C:Golgi membrane"/>
    <property type="evidence" value="ECO:0007669"/>
    <property type="project" value="UniProtKB-SubCell"/>
</dbReference>
<dbReference type="GO" id="GO:0016192">
    <property type="term" value="P:vesicle-mediated transport"/>
    <property type="evidence" value="ECO:0007669"/>
    <property type="project" value="TreeGrafter"/>
</dbReference>
<dbReference type="InterPro" id="IPR019365">
    <property type="entry name" value="TVP18/Ca-channel_flower"/>
</dbReference>
<dbReference type="PANTHER" id="PTHR13314">
    <property type="entry name" value="CALCIUM CHANNEL FLOWER HOMOLOG"/>
    <property type="match status" value="1"/>
</dbReference>
<dbReference type="PANTHER" id="PTHR13314:SF2">
    <property type="entry name" value="CALCIUM CHANNEL FLOWER HOMOLOG"/>
    <property type="match status" value="1"/>
</dbReference>
<dbReference type="Pfam" id="PF10233">
    <property type="entry name" value="Cg6151-P"/>
    <property type="match status" value="1"/>
</dbReference>
<dbReference type="SMART" id="SM01077">
    <property type="entry name" value="Cg6151-P"/>
    <property type="match status" value="1"/>
</dbReference>
<accession>Q2GSS4</accession>
<reference key="1">
    <citation type="journal article" date="2015" name="Genome Announc.">
        <title>Draft genome sequence of the cellulolytic fungus Chaetomium globosum.</title>
        <authorList>
            <person name="Cuomo C.A."/>
            <person name="Untereiner W.A."/>
            <person name="Ma L.-J."/>
            <person name="Grabherr M."/>
            <person name="Birren B.W."/>
        </authorList>
    </citation>
    <scope>NUCLEOTIDE SEQUENCE [LARGE SCALE GENOMIC DNA]</scope>
    <source>
        <strain>ATCC 6205 / CBS 148.51 / DSM 1962 / NBRC 6347 / NRRL 1970</strain>
    </source>
</reference>
<keyword id="KW-0325">Glycoprotein</keyword>
<keyword id="KW-0333">Golgi apparatus</keyword>
<keyword id="KW-0472">Membrane</keyword>
<keyword id="KW-1185">Reference proteome</keyword>
<keyword id="KW-0812">Transmembrane</keyword>
<keyword id="KW-1133">Transmembrane helix</keyword>
<gene>
    <name type="primary">TVP18</name>
    <name type="ORF">CHGG_08980</name>
</gene>